<evidence type="ECO:0000255" key="1">
    <source>
        <dbReference type="HAMAP-Rule" id="MF_00044"/>
    </source>
</evidence>
<comment type="function">
    <text evidence="1">Aspartyl-tRNA synthetase with relaxed tRNA specificity since it is able to aspartylate not only its cognate tRNA(Asp) but also tRNA(Asn). Reaction proceeds in two steps: L-aspartate is first activated by ATP to form Asp-AMP and then transferred to the acceptor end of tRNA(Asp/Asn).</text>
</comment>
<comment type="catalytic activity">
    <reaction evidence="1">
        <text>tRNA(Asx) + L-aspartate + ATP = L-aspartyl-tRNA(Asx) + AMP + diphosphate</text>
        <dbReference type="Rhea" id="RHEA:18349"/>
        <dbReference type="Rhea" id="RHEA-COMP:9710"/>
        <dbReference type="Rhea" id="RHEA-COMP:9711"/>
        <dbReference type="ChEBI" id="CHEBI:29991"/>
        <dbReference type="ChEBI" id="CHEBI:30616"/>
        <dbReference type="ChEBI" id="CHEBI:33019"/>
        <dbReference type="ChEBI" id="CHEBI:78442"/>
        <dbReference type="ChEBI" id="CHEBI:78516"/>
        <dbReference type="ChEBI" id="CHEBI:456215"/>
        <dbReference type="EC" id="6.1.1.23"/>
    </reaction>
</comment>
<comment type="subunit">
    <text evidence="1">Homodimer.</text>
</comment>
<comment type="subcellular location">
    <subcellularLocation>
        <location evidence="1">Cytoplasm</location>
    </subcellularLocation>
</comment>
<comment type="similarity">
    <text evidence="1">Belongs to the class-II aminoacyl-tRNA synthetase family. Type 1 subfamily.</text>
</comment>
<protein>
    <recommendedName>
        <fullName evidence="1">Aspartate--tRNA(Asp/Asn) ligase</fullName>
        <ecNumber evidence="1">6.1.1.23</ecNumber>
    </recommendedName>
    <alternativeName>
        <fullName evidence="1">Aspartyl-tRNA synthetase</fullName>
        <shortName evidence="1">AspRS</shortName>
    </alternativeName>
    <alternativeName>
        <fullName evidence="1">Non-discriminating aspartyl-tRNA synthetase</fullName>
        <shortName evidence="1">ND-AspRS</shortName>
    </alternativeName>
</protein>
<accession>Q48FC1</accession>
<dbReference type="EC" id="6.1.1.23" evidence="1"/>
<dbReference type="EMBL" id="CP000058">
    <property type="protein sequence ID" value="AAZ36053.1"/>
    <property type="molecule type" value="Genomic_DNA"/>
</dbReference>
<dbReference type="RefSeq" id="WP_011169276.1">
    <property type="nucleotide sequence ID" value="NC_005773.3"/>
</dbReference>
<dbReference type="SMR" id="Q48FC1"/>
<dbReference type="KEGG" id="psp:PSPPH_3776"/>
<dbReference type="eggNOG" id="COG0173">
    <property type="taxonomic scope" value="Bacteria"/>
</dbReference>
<dbReference type="HOGENOM" id="CLU_014330_3_2_6"/>
<dbReference type="Proteomes" id="UP000000551">
    <property type="component" value="Chromosome"/>
</dbReference>
<dbReference type="GO" id="GO:0005737">
    <property type="term" value="C:cytoplasm"/>
    <property type="evidence" value="ECO:0007669"/>
    <property type="project" value="UniProtKB-SubCell"/>
</dbReference>
<dbReference type="GO" id="GO:0004815">
    <property type="term" value="F:aspartate-tRNA ligase activity"/>
    <property type="evidence" value="ECO:0007669"/>
    <property type="project" value="UniProtKB-UniRule"/>
</dbReference>
<dbReference type="GO" id="GO:0050560">
    <property type="term" value="F:aspartate-tRNA(Asn) ligase activity"/>
    <property type="evidence" value="ECO:0007669"/>
    <property type="project" value="UniProtKB-EC"/>
</dbReference>
<dbReference type="GO" id="GO:0005524">
    <property type="term" value="F:ATP binding"/>
    <property type="evidence" value="ECO:0007669"/>
    <property type="project" value="UniProtKB-UniRule"/>
</dbReference>
<dbReference type="GO" id="GO:0003676">
    <property type="term" value="F:nucleic acid binding"/>
    <property type="evidence" value="ECO:0007669"/>
    <property type="project" value="InterPro"/>
</dbReference>
<dbReference type="GO" id="GO:0006422">
    <property type="term" value="P:aspartyl-tRNA aminoacylation"/>
    <property type="evidence" value="ECO:0007669"/>
    <property type="project" value="UniProtKB-UniRule"/>
</dbReference>
<dbReference type="CDD" id="cd00777">
    <property type="entry name" value="AspRS_core"/>
    <property type="match status" value="1"/>
</dbReference>
<dbReference type="CDD" id="cd04317">
    <property type="entry name" value="EcAspRS_like_N"/>
    <property type="match status" value="1"/>
</dbReference>
<dbReference type="Gene3D" id="3.30.930.10">
    <property type="entry name" value="Bira Bifunctional Protein, Domain 2"/>
    <property type="match status" value="1"/>
</dbReference>
<dbReference type="Gene3D" id="3.30.1360.30">
    <property type="entry name" value="GAD-like domain"/>
    <property type="match status" value="1"/>
</dbReference>
<dbReference type="Gene3D" id="2.40.50.140">
    <property type="entry name" value="Nucleic acid-binding proteins"/>
    <property type="match status" value="1"/>
</dbReference>
<dbReference type="HAMAP" id="MF_00044">
    <property type="entry name" value="Asp_tRNA_synth_type1"/>
    <property type="match status" value="1"/>
</dbReference>
<dbReference type="InterPro" id="IPR004364">
    <property type="entry name" value="Aa-tRNA-synt_II"/>
</dbReference>
<dbReference type="InterPro" id="IPR006195">
    <property type="entry name" value="aa-tRNA-synth_II"/>
</dbReference>
<dbReference type="InterPro" id="IPR045864">
    <property type="entry name" value="aa-tRNA-synth_II/BPL/LPL"/>
</dbReference>
<dbReference type="InterPro" id="IPR004524">
    <property type="entry name" value="Asp-tRNA-ligase_1"/>
</dbReference>
<dbReference type="InterPro" id="IPR047089">
    <property type="entry name" value="Asp-tRNA-ligase_1_N"/>
</dbReference>
<dbReference type="InterPro" id="IPR002312">
    <property type="entry name" value="Asp/Asn-tRNA-synth_IIb"/>
</dbReference>
<dbReference type="InterPro" id="IPR047090">
    <property type="entry name" value="AspRS_core"/>
</dbReference>
<dbReference type="InterPro" id="IPR004115">
    <property type="entry name" value="GAD-like_sf"/>
</dbReference>
<dbReference type="InterPro" id="IPR029351">
    <property type="entry name" value="GAD_dom"/>
</dbReference>
<dbReference type="InterPro" id="IPR012340">
    <property type="entry name" value="NA-bd_OB-fold"/>
</dbReference>
<dbReference type="InterPro" id="IPR004365">
    <property type="entry name" value="NA-bd_OB_tRNA"/>
</dbReference>
<dbReference type="NCBIfam" id="TIGR00459">
    <property type="entry name" value="aspS_bact"/>
    <property type="match status" value="1"/>
</dbReference>
<dbReference type="NCBIfam" id="NF001750">
    <property type="entry name" value="PRK00476.1"/>
    <property type="match status" value="1"/>
</dbReference>
<dbReference type="PANTHER" id="PTHR22594:SF5">
    <property type="entry name" value="ASPARTATE--TRNA LIGASE, MITOCHONDRIAL"/>
    <property type="match status" value="1"/>
</dbReference>
<dbReference type="PANTHER" id="PTHR22594">
    <property type="entry name" value="ASPARTYL/LYSYL-TRNA SYNTHETASE"/>
    <property type="match status" value="1"/>
</dbReference>
<dbReference type="Pfam" id="PF02938">
    <property type="entry name" value="GAD"/>
    <property type="match status" value="1"/>
</dbReference>
<dbReference type="Pfam" id="PF00152">
    <property type="entry name" value="tRNA-synt_2"/>
    <property type="match status" value="1"/>
</dbReference>
<dbReference type="Pfam" id="PF01336">
    <property type="entry name" value="tRNA_anti-codon"/>
    <property type="match status" value="1"/>
</dbReference>
<dbReference type="PRINTS" id="PR01042">
    <property type="entry name" value="TRNASYNTHASP"/>
</dbReference>
<dbReference type="SUPFAM" id="SSF55681">
    <property type="entry name" value="Class II aaRS and biotin synthetases"/>
    <property type="match status" value="1"/>
</dbReference>
<dbReference type="SUPFAM" id="SSF55261">
    <property type="entry name" value="GAD domain-like"/>
    <property type="match status" value="1"/>
</dbReference>
<dbReference type="SUPFAM" id="SSF50249">
    <property type="entry name" value="Nucleic acid-binding proteins"/>
    <property type="match status" value="1"/>
</dbReference>
<dbReference type="PROSITE" id="PS50862">
    <property type="entry name" value="AA_TRNA_LIGASE_II"/>
    <property type="match status" value="1"/>
</dbReference>
<keyword id="KW-0030">Aminoacyl-tRNA synthetase</keyword>
<keyword id="KW-0067">ATP-binding</keyword>
<keyword id="KW-0963">Cytoplasm</keyword>
<keyword id="KW-0436">Ligase</keyword>
<keyword id="KW-0547">Nucleotide-binding</keyword>
<keyword id="KW-0648">Protein biosynthesis</keyword>
<name>SYDND_PSE14</name>
<feature type="chain" id="PRO_0000235547" description="Aspartate--tRNA(Asp/Asn) ligase">
    <location>
        <begin position="1"/>
        <end position="591"/>
    </location>
</feature>
<feature type="region of interest" description="Aspartate" evidence="1">
    <location>
        <begin position="198"/>
        <end position="201"/>
    </location>
</feature>
<feature type="binding site" evidence="1">
    <location>
        <position position="174"/>
    </location>
    <ligand>
        <name>L-aspartate</name>
        <dbReference type="ChEBI" id="CHEBI:29991"/>
    </ligand>
</feature>
<feature type="binding site" evidence="1">
    <location>
        <begin position="220"/>
        <end position="222"/>
    </location>
    <ligand>
        <name>ATP</name>
        <dbReference type="ChEBI" id="CHEBI:30616"/>
    </ligand>
</feature>
<feature type="binding site" evidence="1">
    <location>
        <position position="220"/>
    </location>
    <ligand>
        <name>L-aspartate</name>
        <dbReference type="ChEBI" id="CHEBI:29991"/>
    </ligand>
</feature>
<feature type="binding site" evidence="1">
    <location>
        <position position="229"/>
    </location>
    <ligand>
        <name>ATP</name>
        <dbReference type="ChEBI" id="CHEBI:30616"/>
    </ligand>
</feature>
<feature type="binding site" evidence="1">
    <location>
        <position position="450"/>
    </location>
    <ligand>
        <name>L-aspartate</name>
        <dbReference type="ChEBI" id="CHEBI:29991"/>
    </ligand>
</feature>
<feature type="binding site" evidence="1">
    <location>
        <position position="483"/>
    </location>
    <ligand>
        <name>ATP</name>
        <dbReference type="ChEBI" id="CHEBI:30616"/>
    </ligand>
</feature>
<feature type="binding site" evidence="1">
    <location>
        <position position="490"/>
    </location>
    <ligand>
        <name>L-aspartate</name>
        <dbReference type="ChEBI" id="CHEBI:29991"/>
    </ligand>
</feature>
<feature type="binding site" evidence="1">
    <location>
        <begin position="535"/>
        <end position="538"/>
    </location>
    <ligand>
        <name>ATP</name>
        <dbReference type="ChEBI" id="CHEBI:30616"/>
    </ligand>
</feature>
<feature type="site" description="Important for tRNA non-discrimination" evidence="1">
    <location>
        <position position="31"/>
    </location>
</feature>
<feature type="site" description="Important for tRNA non-discrimination" evidence="1">
    <location>
        <position position="82"/>
    </location>
</feature>
<sequence length="591" mass="66283">MMRSHYCGQLNESLEGQEITLCGWVHRRRDHGGVIFLDIRDREGMAQVVFDPDRADSFAAADRVRSEYVVKVVGKVRARPAGAVNANMASGAIEVLGYELEVLNESETPPFPLNEYSDVGEETRLRYRFIDLRRPEMAEKLRLRSRITTSIRRYLDDSGFLDVETPILTRATPEGARDYLVPSRTHPGSFFALPQSPQLFKQLLMVAGFDRYYQIAKCFRDEDLRADRQPEFTQIDIETSFLNEEDIIGLTEKMVRQLFKEVLDLEFGDFPHMTFEEAMRRYGSDKPDLRNPLELVDVADQLTGVEFKVFSGPANDPKGRVAALRVPGAASMARSQIDDYTKFVSIYGAKGLAYIKVNERAKGPEGLQSPIVKFIPEDNLNVILDRVGAVDGDIVFFGADKFKIVSEALGALRIKIGNDLKLHTCEWAPMWVVDFPMFEENDDGSFTALHHPFTAPKCTPEELEANPATALSRAYDMVLNGTELGGGSIRIHRKEMQQAVFRLLGIAEDEQQEKFGFLLDALKYGAPPHGGLAFGLDRLVMLMAGAQSIREVIAFPKTQSAADVMTQAPGVVDAKALRELHIRLREQPKAE</sequence>
<organism>
    <name type="scientific">Pseudomonas savastanoi pv. phaseolicola (strain 1448A / Race 6)</name>
    <name type="common">Pseudomonas syringae pv. phaseolicola (strain 1448A / Race 6)</name>
    <dbReference type="NCBI Taxonomy" id="264730"/>
    <lineage>
        <taxon>Bacteria</taxon>
        <taxon>Pseudomonadati</taxon>
        <taxon>Pseudomonadota</taxon>
        <taxon>Gammaproteobacteria</taxon>
        <taxon>Pseudomonadales</taxon>
        <taxon>Pseudomonadaceae</taxon>
        <taxon>Pseudomonas</taxon>
    </lineage>
</organism>
<proteinExistence type="inferred from homology"/>
<gene>
    <name evidence="1" type="primary">aspS</name>
    <name type="ordered locus">PSPPH_3776</name>
</gene>
<reference key="1">
    <citation type="journal article" date="2005" name="J. Bacteriol.">
        <title>Whole-genome sequence analysis of Pseudomonas syringae pv. phaseolicola 1448A reveals divergence among pathovars in genes involved in virulence and transposition.</title>
        <authorList>
            <person name="Joardar V."/>
            <person name="Lindeberg M."/>
            <person name="Jackson R.W."/>
            <person name="Selengut J."/>
            <person name="Dodson R."/>
            <person name="Brinkac L.M."/>
            <person name="Daugherty S.C."/>
            <person name="DeBoy R.T."/>
            <person name="Durkin A.S."/>
            <person name="Gwinn Giglio M."/>
            <person name="Madupu R."/>
            <person name="Nelson W.C."/>
            <person name="Rosovitz M.J."/>
            <person name="Sullivan S.A."/>
            <person name="Crabtree J."/>
            <person name="Creasy T."/>
            <person name="Davidsen T.M."/>
            <person name="Haft D.H."/>
            <person name="Zafar N."/>
            <person name="Zhou L."/>
            <person name="Halpin R."/>
            <person name="Holley T."/>
            <person name="Khouri H.M."/>
            <person name="Feldblyum T.V."/>
            <person name="White O."/>
            <person name="Fraser C.M."/>
            <person name="Chatterjee A.K."/>
            <person name="Cartinhour S."/>
            <person name="Schneider D."/>
            <person name="Mansfield J.W."/>
            <person name="Collmer A."/>
            <person name="Buell R."/>
        </authorList>
    </citation>
    <scope>NUCLEOTIDE SEQUENCE [LARGE SCALE GENOMIC DNA]</scope>
    <source>
        <strain>1448A / Race 6</strain>
    </source>
</reference>